<reference key="1">
    <citation type="journal article" date="1997" name="EMBO J.">
        <title>Cloning of an inr- and E-box-binding protein, TFII-I, that interacts physically and functionally with USF1.</title>
        <authorList>
            <person name="Roy A.L."/>
            <person name="Du H."/>
            <person name="Gregor P.D."/>
            <person name="Novina C.D."/>
            <person name="Martinez E."/>
            <person name="Roeder R.G."/>
        </authorList>
    </citation>
    <scope>NUCLEOTIDE SEQUENCE [MRNA] (ISOFORM 2)</scope>
    <scope>PROTEIN SEQUENCE OF 162-171; 366-372; 646-658 AND 940-956</scope>
</reference>
<reference key="2">
    <citation type="journal article" date="1997" name="Genes Dev.">
        <title>A multifunctional DNA-binding protein that promotes the formation of serum response factor/homeodomain complexes: identity to TFII-I.</title>
        <authorList>
            <person name="Grueneberg D.A."/>
            <person name="Henry R.W."/>
            <person name="Brauer A."/>
            <person name="Novina C.D."/>
            <person name="Cheriyath V."/>
            <person name="Roy A.L."/>
            <person name="Gilman M."/>
        </authorList>
    </citation>
    <scope>NUCLEOTIDE SEQUENCE [MRNA] (ISOFORM 2)</scope>
    <scope>PROTEIN SEQUENCE OF 291-294 AND 316-333</scope>
    <source>
        <tissue>Cervix carcinoma</tissue>
    </source>
</reference>
<reference key="3">
    <citation type="journal article" date="1997" name="Proc. Natl. Acad. Sci. U.S.A.">
        <title>BAP-135, a target for Bruton's tyrosine kinase in response to B cell receptor engagement.</title>
        <authorList>
            <person name="Yang W."/>
            <person name="Desiderio S."/>
        </authorList>
    </citation>
    <scope>NUCLEOTIDE SEQUENCE [MRNA] (ISOFORM 2)</scope>
    <scope>PROTEIN SEQUENCE OF 144-154; 495-514 AND 681-702</scope>
</reference>
<reference key="4">
    <citation type="journal article" date="1998" name="Hum. Mol. Genet.">
        <title>A duplicated gene in the breakpoint regions of the 7q11.23 Williams-Beuren syndrome deletion encodes the initiator binding protein TFII-I and BAP-135, a phosphorylation target of BTK.</title>
        <authorList>
            <person name="Perez Jurado L.A."/>
            <person name="Wang Y.-K."/>
            <person name="Peoples R."/>
            <person name="Coloma A."/>
            <person name="Cruces J."/>
            <person name="Francke U."/>
        </authorList>
    </citation>
    <scope>NUCLEOTIDE SEQUENCE [MRNA] (ISOFORMS 1; 2; 3 AND 4)</scope>
</reference>
<reference key="5">
    <citation type="submission" date="2003-05" db="EMBL/GenBank/DDBJ databases">
        <title>Cloning of human full-length CDSs in BD Creator(TM) system donor vector.</title>
        <authorList>
            <person name="Kalnine N."/>
            <person name="Chen X."/>
            <person name="Rolfs A."/>
            <person name="Halleck A."/>
            <person name="Hines L."/>
            <person name="Eisenstein S."/>
            <person name="Koundinya M."/>
            <person name="Raphael J."/>
            <person name="Moreira D."/>
            <person name="Kelley T."/>
            <person name="LaBaer J."/>
            <person name="Lin Y."/>
            <person name="Phelan M."/>
            <person name="Farmer A."/>
        </authorList>
    </citation>
    <scope>NUCLEOTIDE SEQUENCE [LARGE SCALE MRNA] (ISOFORM 5)</scope>
</reference>
<reference key="6">
    <citation type="journal article" date="2003" name="Nature">
        <title>The DNA sequence of human chromosome 7.</title>
        <authorList>
            <person name="Hillier L.W."/>
            <person name="Fulton R.S."/>
            <person name="Fulton L.A."/>
            <person name="Graves T.A."/>
            <person name="Pepin K.H."/>
            <person name="Wagner-McPherson C."/>
            <person name="Layman D."/>
            <person name="Maas J."/>
            <person name="Jaeger S."/>
            <person name="Walker R."/>
            <person name="Wylie K."/>
            <person name="Sekhon M."/>
            <person name="Becker M.C."/>
            <person name="O'Laughlin M.D."/>
            <person name="Schaller M.E."/>
            <person name="Fewell G.A."/>
            <person name="Delehaunty K.D."/>
            <person name="Miner T.L."/>
            <person name="Nash W.E."/>
            <person name="Cordes M."/>
            <person name="Du H."/>
            <person name="Sun H."/>
            <person name="Edwards J."/>
            <person name="Bradshaw-Cordum H."/>
            <person name="Ali J."/>
            <person name="Andrews S."/>
            <person name="Isak A."/>
            <person name="Vanbrunt A."/>
            <person name="Nguyen C."/>
            <person name="Du F."/>
            <person name="Lamar B."/>
            <person name="Courtney L."/>
            <person name="Kalicki J."/>
            <person name="Ozersky P."/>
            <person name="Bielicki L."/>
            <person name="Scott K."/>
            <person name="Holmes A."/>
            <person name="Harkins R."/>
            <person name="Harris A."/>
            <person name="Strong C.M."/>
            <person name="Hou S."/>
            <person name="Tomlinson C."/>
            <person name="Dauphin-Kohlberg S."/>
            <person name="Kozlowicz-Reilly A."/>
            <person name="Leonard S."/>
            <person name="Rohlfing T."/>
            <person name="Rock S.M."/>
            <person name="Tin-Wollam A.-M."/>
            <person name="Abbott A."/>
            <person name="Minx P."/>
            <person name="Maupin R."/>
            <person name="Strowmatt C."/>
            <person name="Latreille P."/>
            <person name="Miller N."/>
            <person name="Johnson D."/>
            <person name="Murray J."/>
            <person name="Woessner J.P."/>
            <person name="Wendl M.C."/>
            <person name="Yang S.-P."/>
            <person name="Schultz B.R."/>
            <person name="Wallis J.W."/>
            <person name="Spieth J."/>
            <person name="Bieri T.A."/>
            <person name="Nelson J.O."/>
            <person name="Berkowicz N."/>
            <person name="Wohldmann P.E."/>
            <person name="Cook L.L."/>
            <person name="Hickenbotham M.T."/>
            <person name="Eldred J."/>
            <person name="Williams D."/>
            <person name="Bedell J.A."/>
            <person name="Mardis E.R."/>
            <person name="Clifton S.W."/>
            <person name="Chissoe S.L."/>
            <person name="Marra M.A."/>
            <person name="Raymond C."/>
            <person name="Haugen E."/>
            <person name="Gillett W."/>
            <person name="Zhou Y."/>
            <person name="James R."/>
            <person name="Phelps K."/>
            <person name="Iadanoto S."/>
            <person name="Bubb K."/>
            <person name="Simms E."/>
            <person name="Levy R."/>
            <person name="Clendenning J."/>
            <person name="Kaul R."/>
            <person name="Kent W.J."/>
            <person name="Furey T.S."/>
            <person name="Baertsch R.A."/>
            <person name="Brent M.R."/>
            <person name="Keibler E."/>
            <person name="Flicek P."/>
            <person name="Bork P."/>
            <person name="Suyama M."/>
            <person name="Bailey J.A."/>
            <person name="Portnoy M.E."/>
            <person name="Torrents D."/>
            <person name="Chinwalla A.T."/>
            <person name="Gish W.R."/>
            <person name="Eddy S.R."/>
            <person name="McPherson J.D."/>
            <person name="Olson M.V."/>
            <person name="Eichler E.E."/>
            <person name="Green E.D."/>
            <person name="Waterston R.H."/>
            <person name="Wilson R.K."/>
        </authorList>
    </citation>
    <scope>NUCLEOTIDE SEQUENCE [LARGE SCALE GENOMIC DNA]</scope>
</reference>
<reference key="7">
    <citation type="submission" date="2005-09" db="EMBL/GenBank/DDBJ databases">
        <authorList>
            <person name="Mural R.J."/>
            <person name="Istrail S."/>
            <person name="Sutton G."/>
            <person name="Florea L."/>
            <person name="Halpern A.L."/>
            <person name="Mobarry C.M."/>
            <person name="Lippert R."/>
            <person name="Walenz B."/>
            <person name="Shatkay H."/>
            <person name="Dew I."/>
            <person name="Miller J.R."/>
            <person name="Flanigan M.J."/>
            <person name="Edwards N.J."/>
            <person name="Bolanos R."/>
            <person name="Fasulo D."/>
            <person name="Halldorsson B.V."/>
            <person name="Hannenhalli S."/>
            <person name="Turner R."/>
            <person name="Yooseph S."/>
            <person name="Lu F."/>
            <person name="Nusskern D.R."/>
            <person name="Shue B.C."/>
            <person name="Zheng X.H."/>
            <person name="Zhong F."/>
            <person name="Delcher A.L."/>
            <person name="Huson D.H."/>
            <person name="Kravitz S.A."/>
            <person name="Mouchard L."/>
            <person name="Reinert K."/>
            <person name="Remington K.A."/>
            <person name="Clark A.G."/>
            <person name="Waterman M.S."/>
            <person name="Eichler E.E."/>
            <person name="Adams M.D."/>
            <person name="Hunkapiller M.W."/>
            <person name="Myers E.W."/>
            <person name="Venter J.C."/>
        </authorList>
    </citation>
    <scope>NUCLEOTIDE SEQUENCE [LARGE SCALE GENOMIC DNA]</scope>
</reference>
<reference key="8">
    <citation type="journal article" date="2004" name="Genome Res.">
        <title>The status, quality, and expansion of the NIH full-length cDNA project: the Mammalian Gene Collection (MGC).</title>
        <authorList>
            <consortium name="The MGC Project Team"/>
        </authorList>
    </citation>
    <scope>NUCLEOTIDE SEQUENCE [LARGE SCALE MRNA] (ISOFORM 2)</scope>
    <scope>NUCLEOTIDE SEQUENCE [LARGE SCALE MRNA] (ISOFORM 5)</scope>
    <source>
        <tissue>Lymph</tissue>
        <tissue>Ovary</tissue>
    </source>
</reference>
<reference key="9">
    <citation type="submission" date="2007-07" db="UniProtKB">
        <authorList>
            <person name="Bienvenut W.V."/>
            <person name="Murray L."/>
            <person name="Brunton V.G."/>
            <person name="Frame M.C."/>
        </authorList>
    </citation>
    <scope>PROTEIN SEQUENCE OF 2-20; 131-140; 178-185; 364-371; 444-456; 495-514; 540-555; 574-594; 620-628; 870-878; 917-927 AND 929-937</scope>
    <scope>CLEAVAGE OF INITIATOR METHIONINE</scope>
    <scope>ACETYLATION AT ALA-2</scope>
    <scope>IDENTIFICATION BY MASS SPECTROMETRY</scope>
    <source>
        <tissue>Colon adenocarcinoma</tissue>
    </source>
</reference>
<reference key="10">
    <citation type="journal article" date="1999" name="Mol. Cell. Biol.">
        <title>Regulation of nuclear localization and transcriptional activity of TFII-I by Bruton's tyrosine kinase.</title>
        <authorList>
            <person name="Novina C.D."/>
            <person name="Kumar S."/>
            <person name="Bajpai U."/>
            <person name="Cheriyath V."/>
            <person name="Zhang K."/>
            <person name="Pillai S."/>
            <person name="Wortis H.H."/>
            <person name="Roy A.L."/>
        </authorList>
    </citation>
    <scope>INTERACTION WITH BTK</scope>
    <scope>FUNCTION</scope>
    <scope>SUBCELLULAR LOCATION</scope>
    <scope>PHOSPHORYLATION</scope>
</reference>
<reference key="11">
    <citation type="journal article" date="2001" name="J. Biol. Chem.">
        <title>Identification of phosphorylation sites for Bruton's tyrosine kinase within the transcriptional regulator BAP/TFII-I.</title>
        <authorList>
            <person name="Egloff A.M."/>
            <person name="Desiderio S."/>
        </authorList>
    </citation>
    <scope>PHOSPHORYLATION AT TYR-248; TYR-398 AND TYR-503</scope>
    <scope>INTERACTION WITH BTK</scope>
    <scope>FUNCTION</scope>
    <scope>MUTAGENESIS OF TYR-248; TYR-398; TYR-460 AND TYR-503</scope>
</reference>
<reference key="12">
    <citation type="journal article" date="2002" name="J. Biol. Chem.">
        <title>cGMP-dependent protein kinase I beta physically and functionally interacts with the transcriptional regulator TFII-I.</title>
        <authorList>
            <person name="Casteel D.E."/>
            <person name="Zhuang S."/>
            <person name="Gudi T."/>
            <person name="Tang J."/>
            <person name="Vuica M."/>
            <person name="Desiderio S."/>
            <person name="Pilz R.B."/>
        </authorList>
    </citation>
    <scope>PHOSPHORYLATION AT SER-412 AND SER-784 BY PRKG1</scope>
    <scope>INTERACTION WITH PRKG1</scope>
</reference>
<reference key="13">
    <citation type="journal article" date="2005" name="J. Biol. Chem.">
        <title>Systematic identification and analysis of mammalian small ubiquitin-like modifier substrates.</title>
        <authorList>
            <person name="Gocke C.B."/>
            <person name="Yu H."/>
            <person name="Kang J."/>
        </authorList>
    </citation>
    <scope>SUMOYLATION</scope>
</reference>
<reference key="14">
    <citation type="journal article" date="2006" name="Cell">
        <title>Global, in vivo, and site-specific phosphorylation dynamics in signaling networks.</title>
        <authorList>
            <person name="Olsen J.V."/>
            <person name="Blagoev B."/>
            <person name="Gnad F."/>
            <person name="Macek B."/>
            <person name="Kumar C."/>
            <person name="Mortensen P."/>
            <person name="Mann M."/>
        </authorList>
    </citation>
    <scope>IDENTIFICATION BY MASS SPECTROMETRY [LARGE SCALE ANALYSIS]</scope>
    <source>
        <tissue>Cervix carcinoma</tissue>
    </source>
</reference>
<reference key="15">
    <citation type="journal article" date="2006" name="Mol. Cell. Biol.">
        <title>Induction of immunoglobulin heavy-chain transcription through the transcription factor Bright requires TFII-I.</title>
        <authorList>
            <person name="Rajaiya J."/>
            <person name="Nixon J.C."/>
            <person name="Ayers N."/>
            <person name="Desgranges Z.P."/>
            <person name="Roy A.L."/>
            <person name="Webb C.F."/>
        </authorList>
    </citation>
    <scope>INTERACTION WITH ARID3A AND BTK</scope>
    <scope>PHOSPHORYLATION AT TYR-248</scope>
    <scope>FUNCTION</scope>
</reference>
<reference key="16">
    <citation type="journal article" date="2006" name="Nat. Biotechnol.">
        <title>A probability-based approach for high-throughput protein phosphorylation analysis and site localization.</title>
        <authorList>
            <person name="Beausoleil S.A."/>
            <person name="Villen J."/>
            <person name="Gerber S.A."/>
            <person name="Rush J."/>
            <person name="Gygi S.P."/>
        </authorList>
    </citation>
    <scope>PHOSPHORYLATION [LARGE SCALE ANALYSIS] AT SER-210</scope>
    <scope>IDENTIFICATION BY MASS SPECTROMETRY [LARGE SCALE ANALYSIS]</scope>
    <source>
        <tissue>Cervix carcinoma</tissue>
    </source>
</reference>
<reference key="17">
    <citation type="journal article" date="2007" name="J. Proteome Res.">
        <title>Improved titanium dioxide enrichment of phosphopeptides from HeLa cells and high confident phosphopeptide identification by cross-validation of MS/MS and MS/MS/MS spectra.</title>
        <authorList>
            <person name="Yu L.R."/>
            <person name="Zhu Z."/>
            <person name="Chan K.C."/>
            <person name="Issaq H.J."/>
            <person name="Dimitrov D.S."/>
            <person name="Veenstra T.D."/>
        </authorList>
    </citation>
    <scope>IDENTIFICATION BY MASS SPECTROMETRY [LARGE SCALE ANALYSIS]</scope>
    <source>
        <tissue>Cervix carcinoma</tissue>
    </source>
</reference>
<reference key="18">
    <citation type="journal article" date="2008" name="Proc. Natl. Acad. Sci. U.S.A.">
        <title>A quantitative atlas of mitotic phosphorylation.</title>
        <authorList>
            <person name="Dephoure N."/>
            <person name="Zhou C."/>
            <person name="Villen J."/>
            <person name="Beausoleil S.A."/>
            <person name="Bakalarski C.E."/>
            <person name="Elledge S.J."/>
            <person name="Gygi S.P."/>
        </authorList>
    </citation>
    <scope>PHOSPHORYLATION [LARGE SCALE ANALYSIS] AT SER-103; SER-207; SER-210 AND THR-558</scope>
    <scope>IDENTIFICATION BY MASS SPECTROMETRY [LARGE SCALE ANALYSIS]</scope>
    <source>
        <tissue>Cervix carcinoma</tissue>
    </source>
</reference>
<reference key="19">
    <citation type="journal article" date="2009" name="Anal. Chem.">
        <title>Lys-N and trypsin cover complementary parts of the phosphoproteome in a refined SCX-based approach.</title>
        <authorList>
            <person name="Gauci S."/>
            <person name="Helbig A.O."/>
            <person name="Slijper M."/>
            <person name="Krijgsveld J."/>
            <person name="Heck A.J."/>
            <person name="Mohammed S."/>
        </authorList>
    </citation>
    <scope>ACETYLATION [LARGE SCALE ANALYSIS] AT ALA-2</scope>
    <scope>CLEAVAGE OF INITIATOR METHIONINE [LARGE SCALE ANALYSIS]</scope>
    <scope>IDENTIFICATION BY MASS SPECTROMETRY [LARGE SCALE ANALYSIS]</scope>
</reference>
<reference key="20">
    <citation type="journal article" date="2009" name="Sci. Signal.">
        <title>Quantitative phosphoproteomic analysis of T cell receptor signaling reveals system-wide modulation of protein-protein interactions.</title>
        <authorList>
            <person name="Mayya V."/>
            <person name="Lundgren D.H."/>
            <person name="Hwang S.-I."/>
            <person name="Rezaul K."/>
            <person name="Wu L."/>
            <person name="Eng J.K."/>
            <person name="Rodionov V."/>
            <person name="Han D.K."/>
        </authorList>
    </citation>
    <scope>PHOSPHORYLATION [LARGE SCALE ANALYSIS] AT SER-103 AND THR-558</scope>
    <scope>IDENTIFICATION BY MASS SPECTROMETRY [LARGE SCALE ANALYSIS]</scope>
    <source>
        <tissue>Leukemic T-cell</tissue>
    </source>
</reference>
<reference key="21">
    <citation type="journal article" date="2010" name="Sci. Signal.">
        <title>Quantitative phosphoproteomics reveals widespread full phosphorylation site occupancy during mitosis.</title>
        <authorList>
            <person name="Olsen J.V."/>
            <person name="Vermeulen M."/>
            <person name="Santamaria A."/>
            <person name="Kumar C."/>
            <person name="Miller M.L."/>
            <person name="Jensen L.J."/>
            <person name="Gnad F."/>
            <person name="Cox J."/>
            <person name="Jensen T.S."/>
            <person name="Nigg E.A."/>
            <person name="Brunak S."/>
            <person name="Mann M."/>
        </authorList>
    </citation>
    <scope>PHOSPHORYLATION [LARGE SCALE ANALYSIS] AT SER-103; THR-558 AND SER-823</scope>
    <scope>IDENTIFICATION BY MASS SPECTROMETRY [LARGE SCALE ANALYSIS]</scope>
    <source>
        <tissue>Cervix carcinoma</tissue>
    </source>
</reference>
<reference key="22">
    <citation type="journal article" date="2011" name="BMC Syst. Biol.">
        <title>Initial characterization of the human central proteome.</title>
        <authorList>
            <person name="Burkard T.R."/>
            <person name="Planyavsky M."/>
            <person name="Kaupe I."/>
            <person name="Breitwieser F.P."/>
            <person name="Buerckstuemmer T."/>
            <person name="Bennett K.L."/>
            <person name="Superti-Furga G."/>
            <person name="Colinge J."/>
        </authorList>
    </citation>
    <scope>IDENTIFICATION BY MASS SPECTROMETRY [LARGE SCALE ANALYSIS]</scope>
</reference>
<reference key="23">
    <citation type="journal article" date="2011" name="Sci. Signal.">
        <title>System-wide temporal characterization of the proteome and phosphoproteome of human embryonic stem cell differentiation.</title>
        <authorList>
            <person name="Rigbolt K.T."/>
            <person name="Prokhorova T.A."/>
            <person name="Akimov V."/>
            <person name="Henningsen J."/>
            <person name="Johansen P.T."/>
            <person name="Kratchmarova I."/>
            <person name="Kassem M."/>
            <person name="Mann M."/>
            <person name="Olsen J.V."/>
            <person name="Blagoev B."/>
        </authorList>
    </citation>
    <scope>PHOSPHORYLATION [LARGE SCALE ANALYSIS] AT SER-668</scope>
    <scope>IDENTIFICATION BY MASS SPECTROMETRY [LARGE SCALE ANALYSIS]</scope>
</reference>
<reference key="24">
    <citation type="journal article" date="2012" name="Mol. Cell. Proteomics">
        <title>Comparative large-scale characterisation of plant vs. mammal proteins reveals similar and idiosyncratic N-alpha acetylation features.</title>
        <authorList>
            <person name="Bienvenut W.V."/>
            <person name="Sumpton D."/>
            <person name="Martinez A."/>
            <person name="Lilla S."/>
            <person name="Espagne C."/>
            <person name="Meinnel T."/>
            <person name="Giglione C."/>
        </authorList>
    </citation>
    <scope>ACETYLATION [LARGE SCALE ANALYSIS] AT ALA-2</scope>
    <scope>CLEAVAGE OF INITIATOR METHIONINE [LARGE SCALE ANALYSIS]</scope>
    <scope>IDENTIFICATION BY MASS SPECTROMETRY [LARGE SCALE ANALYSIS]</scope>
</reference>
<reference key="25">
    <citation type="journal article" date="2012" name="Proc. Natl. Acad. Sci. U.S.A.">
        <title>N-terminal acetylome analyses and functional insights of the N-terminal acetyltransferase NatB.</title>
        <authorList>
            <person name="Van Damme P."/>
            <person name="Lasa M."/>
            <person name="Polevoda B."/>
            <person name="Gazquez C."/>
            <person name="Elosegui-Artola A."/>
            <person name="Kim D.S."/>
            <person name="De Juan-Pardo E."/>
            <person name="Demeyer K."/>
            <person name="Hole K."/>
            <person name="Larrea E."/>
            <person name="Timmerman E."/>
            <person name="Prieto J."/>
            <person name="Arnesen T."/>
            <person name="Sherman F."/>
            <person name="Gevaert K."/>
            <person name="Aldabe R."/>
        </authorList>
    </citation>
    <scope>ACETYLATION [LARGE SCALE ANALYSIS] AT ALA-2</scope>
    <scope>CLEAVAGE OF INITIATOR METHIONINE [LARGE SCALE ANALYSIS]</scope>
    <scope>IDENTIFICATION BY MASS SPECTROMETRY [LARGE SCALE ANALYSIS]</scope>
</reference>
<reference key="26">
    <citation type="journal article" date="2013" name="J. Proteome Res.">
        <title>Toward a comprehensive characterization of a human cancer cell phosphoproteome.</title>
        <authorList>
            <person name="Zhou H."/>
            <person name="Di Palma S."/>
            <person name="Preisinger C."/>
            <person name="Peng M."/>
            <person name="Polat A.N."/>
            <person name="Heck A.J."/>
            <person name="Mohammed S."/>
        </authorList>
    </citation>
    <scope>PHOSPHORYLATION [LARGE SCALE ANALYSIS] AT SER-19; SER-103; SER-210; SER-214; SER-412; SER-517; THR-558; SER-674; SER-722 AND SER-784</scope>
    <scope>IDENTIFICATION BY MASS SPECTROMETRY [LARGE SCALE ANALYSIS]</scope>
    <source>
        <tissue>Cervix carcinoma</tissue>
        <tissue>Erythroleukemia</tissue>
    </source>
</reference>
<reference key="27">
    <citation type="journal article" date="2014" name="J. Proteomics">
        <title>An enzyme assisted RP-RPLC approach for in-depth analysis of human liver phosphoproteome.</title>
        <authorList>
            <person name="Bian Y."/>
            <person name="Song C."/>
            <person name="Cheng K."/>
            <person name="Dong M."/>
            <person name="Wang F."/>
            <person name="Huang J."/>
            <person name="Sun D."/>
            <person name="Wang L."/>
            <person name="Ye M."/>
            <person name="Zou H."/>
        </authorList>
    </citation>
    <scope>PHOSPHORYLATION [LARGE SCALE ANALYSIS] AT SER-103 AND SER-823</scope>
    <scope>PHOSPHORYLATION [LARGE SCALE ANALYSIS] AT SER-278 (ISOFORM 2)</scope>
    <scope>PHOSPHORYLATION [LARGE SCALE ANALYSIS] AT SER-298 (ISOFORM 4)</scope>
    <scope>IDENTIFICATION BY MASS SPECTROMETRY [LARGE SCALE ANALYSIS]</scope>
    <source>
        <tissue>Liver</tissue>
    </source>
</reference>
<reference key="28">
    <citation type="journal article" date="2014" name="Mol. Cell. Proteomics">
        <title>Immunoaffinity enrichment and mass spectrometry analysis of protein methylation.</title>
        <authorList>
            <person name="Guo A."/>
            <person name="Gu H."/>
            <person name="Zhou J."/>
            <person name="Mulhern D."/>
            <person name="Wang Y."/>
            <person name="Lee K.A."/>
            <person name="Yang V."/>
            <person name="Aguiar M."/>
            <person name="Kornhauser J."/>
            <person name="Jia X."/>
            <person name="Ren J."/>
            <person name="Beausoleil S.A."/>
            <person name="Silva J.C."/>
            <person name="Vemulapalli V."/>
            <person name="Bedford M.T."/>
            <person name="Comb M.J."/>
        </authorList>
    </citation>
    <scope>IDENTIFICATION BY MASS SPECTROMETRY [LARGE SCALE ANALYSIS]</scope>
    <source>
        <tissue>Colon carcinoma</tissue>
    </source>
</reference>
<reference key="29">
    <citation type="journal article" date="2014" name="Nat. Struct. Mol. Biol.">
        <title>Uncovering global SUMOylation signaling networks in a site-specific manner.</title>
        <authorList>
            <person name="Hendriks I.A."/>
            <person name="D'Souza R.C."/>
            <person name="Yang B."/>
            <person name="Verlaan-de Vries M."/>
            <person name="Mann M."/>
            <person name="Vertegaal A.C."/>
        </authorList>
    </citation>
    <scope>SUMOYLATION [LARGE SCALE ANALYSIS] AT LYS-94; LYS-221; LYS-343; LYS-353; LYS-456; LYS-488; LYS-561; LYS-715 AND LYS-991</scope>
    <scope>IDENTIFICATION BY MASS SPECTROMETRY [LARGE SCALE ANALYSIS]</scope>
</reference>
<reference key="30">
    <citation type="journal article" date="2014" name="Proc. Natl. Acad. Sci. U.S.A.">
        <title>Mapping of SUMO sites and analysis of SUMOylation changes induced by external stimuli.</title>
        <authorList>
            <person name="Impens F."/>
            <person name="Radoshevich L."/>
            <person name="Cossart P."/>
            <person name="Ribet D."/>
        </authorList>
    </citation>
    <scope>SUMOYLATION [LARGE SCALE ANALYSIS] AT LYS-221 AND LYS-991</scope>
    <scope>IDENTIFICATION BY MASS SPECTROMETRY [LARGE SCALE ANALYSIS]</scope>
</reference>
<reference key="31">
    <citation type="journal article" date="2015" name="Cell Rep.">
        <title>SUMO-2 orchestrates chromatin modifiers in response to DNA damage.</title>
        <authorList>
            <person name="Hendriks I.A."/>
            <person name="Treffers L.W."/>
            <person name="Verlaan-de Vries M."/>
            <person name="Olsen J.V."/>
            <person name="Vertegaal A.C."/>
        </authorList>
    </citation>
    <scope>SUMOYLATION [LARGE SCALE ANALYSIS] AT LYS-94; LYS-130; LYS-221; LYS-326; LYS-343; LYS-353; LYS-456; LYS-488; LYS-561; LYS-660; LYS-664; LYS-715 AND LYS-991</scope>
    <scope>IDENTIFICATION BY MASS SPECTROMETRY [LARGE SCALE ANALYSIS]</scope>
</reference>
<reference key="32">
    <citation type="journal article" date="2015" name="Mol. Cell. Proteomics">
        <title>System-wide analysis of SUMOylation dynamics in response to replication stress reveals novel small ubiquitin-like modified target proteins and acceptor lysines relevant for genome stability.</title>
        <authorList>
            <person name="Xiao Z."/>
            <person name="Chang J.G."/>
            <person name="Hendriks I.A."/>
            <person name="Sigurdsson J.O."/>
            <person name="Olsen J.V."/>
            <person name="Vertegaal A.C."/>
        </authorList>
    </citation>
    <scope>SUMOYLATION [LARGE SCALE ANALYSIS] AT LYS-86; LYS-221; LYS-456; LYS-488; LYS-561; LYS-664; LYS-816 AND LYS-991</scope>
    <scope>IDENTIFICATION BY MASS SPECTROMETRY [LARGE SCALE ANALYSIS]</scope>
</reference>
<reference key="33">
    <citation type="journal article" date="2015" name="Proteomics">
        <title>N-terminome analysis of the human mitochondrial proteome.</title>
        <authorList>
            <person name="Vaca Jacome A.S."/>
            <person name="Rabilloud T."/>
            <person name="Schaeffer-Reiss C."/>
            <person name="Rompais M."/>
            <person name="Ayoub D."/>
            <person name="Lane L."/>
            <person name="Bairoch A."/>
            <person name="Van Dorsselaer A."/>
            <person name="Carapito C."/>
        </authorList>
    </citation>
    <scope>IDENTIFICATION BY MASS SPECTROMETRY [LARGE SCALE ANALYSIS]</scope>
</reference>
<reference key="34">
    <citation type="journal article" date="2017" name="Nat. Struct. Mol. Biol.">
        <title>Site-specific mapping of the human SUMO proteome reveals co-modification with phosphorylation.</title>
        <authorList>
            <person name="Hendriks I.A."/>
            <person name="Lyon D."/>
            <person name="Young C."/>
            <person name="Jensen L.J."/>
            <person name="Vertegaal A.C."/>
            <person name="Nielsen M.L."/>
        </authorList>
    </citation>
    <scope>SUMOYLATION [LARGE SCALE ANALYSIS] AT LYS-35; LYS-86; LYS-92; LYS-94; LYS-130; LYS-140; LYS-185; LYS-219; LYS-221; LYS-326; LYS-343; LYS-353; LYS-380; LYS-435; LYS-450; LYS-456; LYS-488; LYS-494; LYS-526; LYS-561; LYS-660; LYS-664; LYS-670; LYS-680; LYS-715; LYS-816; LYS-827; LYS-861; LYS-864; LYS-879; LYS-891 AND LYS-991</scope>
    <scope>IDENTIFICATION BY MASS SPECTROMETRY [LARGE SCALE ANALYSIS]</scope>
</reference>
<reference key="35">
    <citation type="journal article" date="2020" name="Cell. Mol. Life Sci.">
        <title>GPR50-Ctail cleavage and nuclear translocation: a new signal transduction mode for G protein-coupled receptors.</title>
        <authorList>
            <person name="Ahmad R."/>
            <person name="Lahuna O."/>
            <person name="Sidibe A."/>
            <person name="Daulat A."/>
            <person name="Zhang Q."/>
            <person name="Luka M."/>
            <person name="Guillaume J.L."/>
            <person name="Gallet S."/>
            <person name="Guillonneau F."/>
            <person name="Hamroune J."/>
            <person name="Polo S."/>
            <person name="Prevot V."/>
            <person name="Delagrange P."/>
            <person name="Dam J."/>
            <person name="Jockers R."/>
        </authorList>
    </citation>
    <scope>INTERACTION WITH GPR50 (C-TERMINAL DOMAIN)</scope>
</reference>
<reference key="36">
    <citation type="submission" date="2007-08" db="PDB data bank">
        <title>Solution structure of RSGI RUH-052, a GTF2I domain in human.</title>
        <authorList>
            <consortium name="RIKEN structural genomics initiative (RSGI)"/>
        </authorList>
    </citation>
    <scope>STRUCTURE BY NMR OF 102-197 AND 361-554</scope>
</reference>
<feature type="initiator methionine" description="Removed" evidence="11 21 25 26">
    <location>
        <position position="1"/>
    </location>
</feature>
<feature type="chain" id="PRO_0000083872" description="General transcription factor II-I">
    <location>
        <begin position="2"/>
        <end position="998"/>
    </location>
</feature>
<feature type="repeat" description="GTF2I-like 1">
    <location>
        <begin position="103"/>
        <end position="197"/>
    </location>
</feature>
<feature type="repeat" description="GTF2I-like 2">
    <location>
        <begin position="352"/>
        <end position="446"/>
    </location>
</feature>
<feature type="repeat" description="GTF2I-like 3">
    <location>
        <begin position="457"/>
        <end position="551"/>
    </location>
</feature>
<feature type="repeat" description="GTF2I-like 4">
    <location>
        <begin position="562"/>
        <end position="656"/>
    </location>
</feature>
<feature type="repeat" description="GTF2I-like 5">
    <location>
        <begin position="724"/>
        <end position="818"/>
    </location>
</feature>
<feature type="repeat" description="GTF2I-like 6">
    <location>
        <begin position="859"/>
        <end position="953"/>
    </location>
</feature>
<feature type="region of interest" description="Disordered" evidence="4">
    <location>
        <begin position="241"/>
        <end position="342"/>
    </location>
</feature>
<feature type="region of interest" description="Disordered" evidence="4">
    <location>
        <begin position="662"/>
        <end position="681"/>
    </location>
</feature>
<feature type="region of interest" description="Disordered" evidence="4">
    <location>
        <begin position="687"/>
        <end position="714"/>
    </location>
</feature>
<feature type="region of interest" description="Disordered" evidence="4">
    <location>
        <begin position="816"/>
        <end position="836"/>
    </location>
</feature>
<feature type="region of interest" description="Disordered" evidence="4">
    <location>
        <begin position="958"/>
        <end position="998"/>
    </location>
</feature>
<feature type="short sequence motif" description="Nuclear localization signal" evidence="2">
    <location>
        <begin position="320"/>
        <end position="327"/>
    </location>
</feature>
<feature type="compositionally biased region" description="Acidic residues" evidence="4">
    <location>
        <begin position="303"/>
        <end position="318"/>
    </location>
</feature>
<feature type="compositionally biased region" description="Polar residues" evidence="4">
    <location>
        <begin position="690"/>
        <end position="711"/>
    </location>
</feature>
<feature type="modified residue" description="N-acetylalanine" evidence="11 21 25 26">
    <location>
        <position position="2"/>
    </location>
</feature>
<feature type="modified residue" description="Phosphoserine" evidence="27">
    <location>
        <position position="19"/>
    </location>
</feature>
<feature type="modified residue" description="Phosphoserine" evidence="20 22 23 27 28">
    <location>
        <position position="103"/>
    </location>
</feature>
<feature type="modified residue" description="N6-acetyllysine; alternate" evidence="1">
    <location>
        <position position="130"/>
    </location>
</feature>
<feature type="modified residue" description="Phosphoserine" evidence="20">
    <location>
        <position position="207"/>
    </location>
</feature>
<feature type="modified residue" description="Phosphoserine" evidence="19 20 27">
    <location>
        <position position="210"/>
    </location>
</feature>
<feature type="modified residue" description="Phosphoserine" evidence="27">
    <location>
        <position position="214"/>
    </location>
</feature>
<feature type="modified residue" description="Phosphotyrosine; by BTK" evidence="6 9">
    <location>
        <position position="248"/>
    </location>
</feature>
<feature type="modified residue" description="N6-acetyllysine; alternate" evidence="1">
    <location>
        <position position="353"/>
    </location>
</feature>
<feature type="modified residue" description="Phosphotyrosine; by BTK" evidence="6">
    <location>
        <position position="398"/>
    </location>
</feature>
<feature type="modified residue" description="Phosphoserine; by PKG/PRKG1" evidence="7 27">
    <location>
        <position position="412"/>
    </location>
</feature>
<feature type="modified residue" description="N6-acetyllysine; alternate" evidence="1">
    <location>
        <position position="450"/>
    </location>
</feature>
<feature type="modified residue" description="Phosphotyrosine; by BTK" evidence="6">
    <location>
        <position position="503"/>
    </location>
</feature>
<feature type="modified residue" description="Phosphoserine" evidence="27">
    <location>
        <position position="517"/>
    </location>
</feature>
<feature type="modified residue" description="Phosphothreonine" evidence="1">
    <location>
        <position position="556"/>
    </location>
</feature>
<feature type="modified residue" description="Phosphothreonine" evidence="20 22 23 27">
    <location>
        <position position="558"/>
    </location>
</feature>
<feature type="modified residue" description="Phosphoserine" evidence="24">
    <location>
        <position position="668"/>
    </location>
</feature>
<feature type="modified residue" description="Phosphoserine" evidence="27">
    <location>
        <position position="674"/>
    </location>
</feature>
<feature type="modified residue" description="N6-acetyllysine; alternate" evidence="1">
    <location>
        <position position="715"/>
    </location>
</feature>
<feature type="modified residue" description="Phosphoserine" evidence="27">
    <location>
        <position position="722"/>
    </location>
</feature>
<feature type="modified residue" description="Phosphoserine; by PKG/PRKG1" evidence="7 27">
    <location>
        <position position="784"/>
    </location>
</feature>
<feature type="modified residue" description="Phosphoserine" evidence="23 28">
    <location>
        <position position="823"/>
    </location>
</feature>
<feature type="cross-link" description="Glycyl lysine isopeptide (Lys-Gly) (interchain with G-Cter in SUMO2)" evidence="33">
    <location>
        <position position="35"/>
    </location>
</feature>
<feature type="cross-link" description="Glycyl lysine isopeptide (Lys-Gly) (interchain with G-Cter in SUMO2)" evidence="31 33">
    <location>
        <position position="86"/>
    </location>
</feature>
<feature type="cross-link" description="Glycyl lysine isopeptide (Lys-Gly) (interchain with G-Cter in SUMO2)" evidence="33">
    <location>
        <position position="92"/>
    </location>
</feature>
<feature type="cross-link" description="Glycyl lysine isopeptide (Lys-Gly) (interchain with G-Cter in SUMO2)" evidence="30 32 33">
    <location>
        <position position="94"/>
    </location>
</feature>
<feature type="cross-link" description="Glycyl lysine isopeptide (Lys-Gly) (interchain with G-Cter in SUMO2); alternate" evidence="32 33">
    <location>
        <position position="130"/>
    </location>
</feature>
<feature type="cross-link" description="Glycyl lysine isopeptide (Lys-Gly) (interchain with G-Cter in SUMO2)" evidence="33">
    <location>
        <position position="140"/>
    </location>
</feature>
<feature type="cross-link" description="Glycyl lysine isopeptide (Lys-Gly) (interchain with G-Cter in SUMO2)" evidence="33">
    <location>
        <position position="185"/>
    </location>
</feature>
<feature type="cross-link" description="Glycyl lysine isopeptide (Lys-Gly) (interchain with G-Cter in SUMO2)" evidence="33">
    <location>
        <position position="219"/>
    </location>
</feature>
<feature type="cross-link" description="Glycyl lysine isopeptide (Lys-Gly) (interchain with G-Cter in SUMO1); alternate" evidence="29">
    <location>
        <position position="221"/>
    </location>
</feature>
<feature type="cross-link" description="Glycyl lysine isopeptide (Lys-Gly) (interchain with G-Cter in SUMO2); alternate" evidence="29 30 31 32 33">
    <location>
        <position position="221"/>
    </location>
</feature>
<feature type="cross-link" description="Glycyl lysine isopeptide (Lys-Gly) (interchain with G-Cter in SUMO2)" evidence="32 33">
    <location>
        <position position="326"/>
    </location>
</feature>
<feature type="cross-link" description="Glycyl lysine isopeptide (Lys-Gly) (interchain with G-Cter in SUMO2)" evidence="30 32 33">
    <location>
        <position position="343"/>
    </location>
</feature>
<feature type="cross-link" description="Glycyl lysine isopeptide (Lys-Gly) (interchain with G-Cter in SUMO2); alternate" evidence="30 32 33">
    <location>
        <position position="353"/>
    </location>
</feature>
<feature type="cross-link" description="Glycyl lysine isopeptide (Lys-Gly) (interchain with G-Cter in SUMO2)" evidence="33">
    <location>
        <position position="380"/>
    </location>
</feature>
<feature type="cross-link" description="Glycyl lysine isopeptide (Lys-Gly) (interchain with G-Cter in SUMO2)" evidence="33">
    <location>
        <position position="435"/>
    </location>
</feature>
<feature type="cross-link" description="Glycyl lysine isopeptide (Lys-Gly) (interchain with G-Cter in SUMO2); alternate" evidence="33">
    <location>
        <position position="450"/>
    </location>
</feature>
<feature type="cross-link" description="Glycyl lysine isopeptide (Lys-Gly) (interchain with G-Cter in SUMO2)" evidence="30 31 32 33">
    <location>
        <position position="456"/>
    </location>
</feature>
<feature type="cross-link" description="Glycyl lysine isopeptide (Lys-Gly) (interchain with G-Cter in SUMO2)" evidence="30 31 32 33">
    <location>
        <position position="488"/>
    </location>
</feature>
<feature type="cross-link" description="Glycyl lysine isopeptide (Lys-Gly) (interchain with G-Cter in SUMO2)" evidence="33">
    <location>
        <position position="494"/>
    </location>
</feature>
<feature type="cross-link" description="Glycyl lysine isopeptide (Lys-Gly) (interchain with G-Cter in SUMO2)" evidence="33">
    <location>
        <position position="526"/>
    </location>
</feature>
<feature type="cross-link" description="Glycyl lysine isopeptide (Lys-Gly) (interchain with G-Cter in SUMO2)" evidence="30 31 32 33">
    <location>
        <position position="561"/>
    </location>
</feature>
<feature type="cross-link" description="Glycyl lysine isopeptide (Lys-Gly) (interchain with G-Cter in SUMO2)" evidence="32 33">
    <location>
        <position position="660"/>
    </location>
</feature>
<feature type="cross-link" description="Glycyl lysine isopeptide (Lys-Gly) (interchain with G-Cter in SUMO2)" evidence="31 32 33">
    <location>
        <position position="664"/>
    </location>
</feature>
<feature type="cross-link" description="Glycyl lysine isopeptide (Lys-Gly) (interchain with G-Cter in SUMO2)" evidence="33">
    <location>
        <position position="670"/>
    </location>
</feature>
<feature type="cross-link" description="Glycyl lysine isopeptide (Lys-Gly) (interchain with G-Cter in SUMO2)" evidence="33">
    <location>
        <position position="680"/>
    </location>
</feature>
<feature type="cross-link" description="Glycyl lysine isopeptide (Lys-Gly) (interchain with G-Cter in SUMO2); alternate" evidence="30 32 33">
    <location>
        <position position="715"/>
    </location>
</feature>
<feature type="cross-link" description="Glycyl lysine isopeptide (Lys-Gly) (interchain with G-Cter in SUMO2)" evidence="31 33">
    <location>
        <position position="816"/>
    </location>
</feature>
<feature type="cross-link" description="Glycyl lysine isopeptide (Lys-Gly) (interchain with G-Cter in SUMO2)" evidence="33">
    <location>
        <position position="827"/>
    </location>
</feature>
<feature type="cross-link" description="Glycyl lysine isopeptide (Lys-Gly) (interchain with G-Cter in SUMO2)" evidence="33">
    <location>
        <position position="861"/>
    </location>
</feature>
<feature type="cross-link" description="Glycyl lysine isopeptide (Lys-Gly) (interchain with G-Cter in SUMO2)" evidence="33">
    <location>
        <position position="864"/>
    </location>
</feature>
<feature type="cross-link" description="Glycyl lysine isopeptide (Lys-Gly) (interchain with G-Cter in SUMO2)" evidence="33">
    <location>
        <position position="879"/>
    </location>
</feature>
<feature type="cross-link" description="Glycyl lysine isopeptide (Lys-Gly) (interchain with G-Cter in SUMO2)" evidence="33">
    <location>
        <position position="891"/>
    </location>
</feature>
<feature type="cross-link" description="Glycyl lysine isopeptide (Lys-Gly) (interchain with G-Cter in SUMO1); alternate" evidence="29">
    <location>
        <position position="991"/>
    </location>
</feature>
<feature type="cross-link" description="Glycyl lysine isopeptide (Lys-Gly) (interchain with G-Cter in SUMO2); alternate" evidence="29 30 31 32 33">
    <location>
        <position position="991"/>
    </location>
</feature>
<feature type="splice variant" id="VSP_003867" description="In isoform 2, isoform 3 and isoform 5." evidence="12 13 14 15 16 17">
    <location>
        <begin position="255"/>
        <end position="274"/>
    </location>
</feature>
<feature type="splice variant" id="VSP_003868" description="In isoform 2 and isoform 4." evidence="12 13 14 15 16">
    <location>
        <begin position="294"/>
        <end position="314"/>
    </location>
</feature>
<feature type="splice variant" id="VSP_055195" description="In isoform 5." evidence="12 17">
    <original>D</original>
    <variation>G</variation>
    <location>
        <position position="294"/>
    </location>
</feature>
<feature type="splice variant" id="VSP_055196" description="In isoform 5." evidence="12 17">
    <location>
        <begin position="295"/>
        <end position="998"/>
    </location>
</feature>
<feature type="sequence variant" id="VAR_051026" description="In dbSNP:rs1057896.">
    <original>L</original>
    <variation>V</variation>
    <location>
        <position position="174"/>
    </location>
</feature>
<feature type="mutagenesis site" description="Abolishes BTK-mediated transcriptional activation. Abolishes BTK-mediated phosphorylation and impairs BTK-mediated transcriptional activation; when associated with F-398 and F-503." evidence="6">
    <original>Y</original>
    <variation>F</variation>
    <location>
        <position position="248"/>
    </location>
</feature>
<feature type="mutagenesis site" description="Abolishes BTK-mediated transcriptional activation. Abolishes BTK-mediated phosphorylation and impairs BTK-mediated transcriptional activation; when associated with F-248 and F-503." evidence="6">
    <original>Y</original>
    <variation>F</variation>
    <location>
        <position position="398"/>
    </location>
</feature>
<feature type="mutagenesis site" description="No change on BTK-mediated transcriptional activation." evidence="6">
    <original>Y</original>
    <variation>F</variation>
    <location>
        <position position="460"/>
    </location>
</feature>
<feature type="mutagenesis site" description="Impairs BTK-mediated transcriptional activation. Abolishes BTK-mediated phosphorylation and impairs BTK-mediated transcriptional activation; when associated with F-248 and F-398." evidence="6">
    <original>Y</original>
    <variation>F</variation>
    <location>
        <position position="503"/>
    </location>
</feature>
<feature type="sequence conflict" description="In Ref. 3; AAB48826." evidence="18" ref="3">
    <original>L</original>
    <variation>G</variation>
    <location>
        <position position="174"/>
    </location>
</feature>
<feature type="sequence conflict" description="In Ref. 3; AAB48826." evidence="18" ref="3">
    <original>A</original>
    <variation>G</variation>
    <location>
        <position position="178"/>
    </location>
</feature>
<feature type="sequence conflict" description="In Ref. 1; AAB70791." evidence="18" ref="1">
    <original>A</original>
    <variation>R</variation>
    <location>
        <position position="481"/>
    </location>
</feature>
<feature type="sequence conflict" description="In Ref. 3; AAB48826." evidence="18" ref="3">
    <original>R</original>
    <variation>H</variation>
    <location>
        <position position="634"/>
    </location>
</feature>
<feature type="sequence conflict" description="In Ref. 3; AAB48826." evidence="18" ref="3">
    <original>E</original>
    <variation>K</variation>
    <location>
        <position position="960"/>
    </location>
</feature>
<feature type="helix" evidence="34">
    <location>
        <begin position="106"/>
        <end position="128"/>
    </location>
</feature>
<feature type="helix" evidence="34">
    <location>
        <begin position="138"/>
        <end position="143"/>
    </location>
</feature>
<feature type="strand" evidence="34">
    <location>
        <begin position="146"/>
        <end position="152"/>
    </location>
</feature>
<feature type="helix" evidence="34">
    <location>
        <begin position="167"/>
        <end position="175"/>
    </location>
</feature>
<feature type="turn" evidence="34">
    <location>
        <begin position="176"/>
        <end position="179"/>
    </location>
</feature>
<feature type="strand" evidence="34">
    <location>
        <begin position="181"/>
        <end position="185"/>
    </location>
</feature>
<feature type="helix" evidence="35">
    <location>
        <begin position="361"/>
        <end position="376"/>
    </location>
</feature>
<feature type="helix" evidence="35">
    <location>
        <begin position="387"/>
        <end position="392"/>
    </location>
</feature>
<feature type="turn" evidence="35">
    <location>
        <begin position="393"/>
        <end position="396"/>
    </location>
</feature>
<feature type="strand" evidence="35">
    <location>
        <begin position="397"/>
        <end position="401"/>
    </location>
</feature>
<feature type="turn" evidence="35">
    <location>
        <begin position="411"/>
        <end position="413"/>
    </location>
</feature>
<feature type="helix" evidence="35">
    <location>
        <begin position="416"/>
        <end position="424"/>
    </location>
</feature>
<feature type="turn" evidence="35">
    <location>
        <begin position="426"/>
        <end position="428"/>
    </location>
</feature>
<feature type="strand" evidence="35">
    <location>
        <begin position="430"/>
        <end position="434"/>
    </location>
</feature>
<feature type="turn" evidence="35">
    <location>
        <begin position="437"/>
        <end position="439"/>
    </location>
</feature>
<feature type="helix" evidence="36">
    <location>
        <begin position="466"/>
        <end position="482"/>
    </location>
</feature>
<feature type="helix" evidence="36">
    <location>
        <begin position="492"/>
        <end position="497"/>
    </location>
</feature>
<feature type="turn" evidence="36">
    <location>
        <begin position="499"/>
        <end position="501"/>
    </location>
</feature>
<feature type="strand" evidence="36">
    <location>
        <begin position="502"/>
        <end position="506"/>
    </location>
</feature>
<feature type="turn" evidence="36">
    <location>
        <begin position="516"/>
        <end position="518"/>
    </location>
</feature>
<feature type="helix" evidence="36">
    <location>
        <begin position="521"/>
        <end position="529"/>
    </location>
</feature>
<feature type="turn" evidence="36">
    <location>
        <begin position="530"/>
        <end position="533"/>
    </location>
</feature>
<feature type="strand" evidence="36">
    <location>
        <begin position="535"/>
        <end position="539"/>
    </location>
</feature>
<feature type="helix" evidence="36">
    <location>
        <begin position="541"/>
        <end position="544"/>
    </location>
</feature>
<feature type="turn" evidence="37">
    <location>
        <begin position="856"/>
        <end position="858"/>
    </location>
</feature>
<feature type="helix" evidence="37">
    <location>
        <begin position="861"/>
        <end position="883"/>
    </location>
</feature>
<feature type="helix" evidence="37">
    <location>
        <begin position="894"/>
        <end position="899"/>
    </location>
</feature>
<feature type="strand" evidence="37">
    <location>
        <begin position="901"/>
        <end position="907"/>
    </location>
</feature>
<feature type="turn" evidence="37">
    <location>
        <begin position="918"/>
        <end position="920"/>
    </location>
</feature>
<feature type="helix" evidence="37">
    <location>
        <begin position="923"/>
        <end position="931"/>
    </location>
</feature>
<feature type="turn" evidence="37">
    <location>
        <begin position="932"/>
        <end position="935"/>
    </location>
</feature>
<feature type="strand" evidence="37">
    <location>
        <begin position="937"/>
        <end position="942"/>
    </location>
</feature>
<feature type="modified residue" description="Phosphoserine" evidence="28">
    <location sequence="P78347-2">
        <position position="278"/>
    </location>
</feature>
<feature type="modified residue" description="Phosphoserine" evidence="28">
    <location sequence="P78347-4">
        <position position="298"/>
    </location>
</feature>
<protein>
    <recommendedName>
        <fullName>General transcription factor II-I</fullName>
        <shortName>GTFII-I</shortName>
        <shortName>TFII-I</shortName>
    </recommendedName>
    <alternativeName>
        <fullName>Bruton tyrosine kinase-associated protein 135</fullName>
        <shortName>BAP-135</shortName>
        <shortName>BTK-associated protein 135</shortName>
    </alternativeName>
    <alternativeName>
        <fullName>SRF-Phox1-interacting protein</fullName>
        <shortName>SPIN</shortName>
    </alternativeName>
    <alternativeName>
        <fullName>Williams-Beuren syndrome chromosomal region 6 protein</fullName>
    </alternativeName>
</protein>
<keyword id="KW-0002">3D-structure</keyword>
<keyword id="KW-0007">Acetylation</keyword>
<keyword id="KW-0025">Alternative splicing</keyword>
<keyword id="KW-0963">Cytoplasm</keyword>
<keyword id="KW-0903">Direct protein sequencing</keyword>
<keyword id="KW-0238">DNA-binding</keyword>
<keyword id="KW-1017">Isopeptide bond</keyword>
<keyword id="KW-0539">Nucleus</keyword>
<keyword id="KW-0597">Phosphoprotein</keyword>
<keyword id="KW-1267">Proteomics identification</keyword>
<keyword id="KW-1185">Reference proteome</keyword>
<keyword id="KW-0677">Repeat</keyword>
<keyword id="KW-0804">Transcription</keyword>
<keyword id="KW-0805">Transcription regulation</keyword>
<keyword id="KW-0832">Ubl conjugation</keyword>
<keyword id="KW-0856">Williams-Beuren syndrome</keyword>
<name>GTF2I_HUMAN</name>
<proteinExistence type="evidence at protein level"/>
<gene>
    <name type="primary">GTF2I</name>
    <name type="synonym">BAP135</name>
    <name type="synonym">WBSCR6</name>
</gene>
<evidence type="ECO:0000250" key="1">
    <source>
        <dbReference type="UniProtKB" id="Q9ESZ8"/>
    </source>
</evidence>
<evidence type="ECO:0000255" key="2"/>
<evidence type="ECO:0000255" key="3">
    <source>
        <dbReference type="PROSITE-ProRule" id="PRU00484"/>
    </source>
</evidence>
<evidence type="ECO:0000256" key="4">
    <source>
        <dbReference type="SAM" id="MobiDB-lite"/>
    </source>
</evidence>
<evidence type="ECO:0000269" key="5">
    <source>
    </source>
</evidence>
<evidence type="ECO:0000269" key="6">
    <source>
    </source>
</evidence>
<evidence type="ECO:0000269" key="7">
    <source>
    </source>
</evidence>
<evidence type="ECO:0000269" key="8">
    <source>
    </source>
</evidence>
<evidence type="ECO:0000269" key="9">
    <source>
    </source>
</evidence>
<evidence type="ECO:0000269" key="10">
    <source>
    </source>
</evidence>
<evidence type="ECO:0000269" key="11">
    <source ref="9"/>
</evidence>
<evidence type="ECO:0000303" key="12">
    <source>
    </source>
</evidence>
<evidence type="ECO:0000303" key="13">
    <source>
    </source>
</evidence>
<evidence type="ECO:0000303" key="14">
    <source>
    </source>
</evidence>
<evidence type="ECO:0000303" key="15">
    <source>
    </source>
</evidence>
<evidence type="ECO:0000303" key="16">
    <source>
    </source>
</evidence>
<evidence type="ECO:0000303" key="17">
    <source ref="5"/>
</evidence>
<evidence type="ECO:0000305" key="18"/>
<evidence type="ECO:0007744" key="19">
    <source>
    </source>
</evidence>
<evidence type="ECO:0007744" key="20">
    <source>
    </source>
</evidence>
<evidence type="ECO:0007744" key="21">
    <source>
    </source>
</evidence>
<evidence type="ECO:0007744" key="22">
    <source>
    </source>
</evidence>
<evidence type="ECO:0007744" key="23">
    <source>
    </source>
</evidence>
<evidence type="ECO:0007744" key="24">
    <source>
    </source>
</evidence>
<evidence type="ECO:0007744" key="25">
    <source>
    </source>
</evidence>
<evidence type="ECO:0007744" key="26">
    <source>
    </source>
</evidence>
<evidence type="ECO:0007744" key="27">
    <source>
    </source>
</evidence>
<evidence type="ECO:0007744" key="28">
    <source>
    </source>
</evidence>
<evidence type="ECO:0007744" key="29">
    <source>
    </source>
</evidence>
<evidence type="ECO:0007744" key="30">
    <source>
    </source>
</evidence>
<evidence type="ECO:0007744" key="31">
    <source>
    </source>
</evidence>
<evidence type="ECO:0007744" key="32">
    <source>
    </source>
</evidence>
<evidence type="ECO:0007744" key="33">
    <source>
    </source>
</evidence>
<evidence type="ECO:0007829" key="34">
    <source>
        <dbReference type="PDB" id="2D9B"/>
    </source>
</evidence>
<evidence type="ECO:0007829" key="35">
    <source>
        <dbReference type="PDB" id="2DN4"/>
    </source>
</evidence>
<evidence type="ECO:0007829" key="36">
    <source>
        <dbReference type="PDB" id="2ED2"/>
    </source>
</evidence>
<evidence type="ECO:0007829" key="37">
    <source>
        <dbReference type="PDB" id="2EJE"/>
    </source>
</evidence>
<comment type="function">
    <text evidence="5 6 9">Interacts with the basal transcription machinery by coordinating the formation of a multiprotein complex at the C-FOS promoter, and linking specific signal responsive activator complexes. Promotes the formation of stable high-order complexes of SRF and PHOX1 and interacts cooperatively with PHOX1 to promote serum-inducible transcription of a reporter gene deriven by the C-FOS serum response element (SRE). Acts as a coregulator for USF1 by binding independently two promoter elements, a pyrimidine-rich initiator (Inr) and an upstream E-box. Required for the formation of functional ARID3A DNA-binding complexes and for activation of immunoglobulin heavy-chain transcription upon B-lymphocyte activation.</text>
</comment>
<comment type="subunit">
    <text evidence="5 6 7 9 10 18">Homodimer (Potential). Interacts with SRF and PHOX1. Binds a pyrimidine-rich initiator (Inr) and a recognition site (E-box) for upstream stimulatory factor 1 (USF1). Associates with the PH domain of Bruton's tyrosine kinase (BTK). May be a component of a BHC histone deacetylase complex that contains HDAC1, HDAC2, HMG20B/BRAF35, KDM1A, RCOR1/CoREST, PHF21A/BHC80, ZMYM2, ZNF217, ZMYM3, GSE1 and GTF2I. Interacts with BTK and ARID3A. Interacts with isoform beta of PRKG1. Interacts with GPR50 (C-TERMINAL DOMAIN).</text>
</comment>
<comment type="interaction">
    <interactant intactId="EBI-359622">
        <id>P78347</id>
    </interactant>
    <interactant intactId="EBI-349905">
        <id>P38398</id>
        <label>BRCA1</label>
    </interactant>
    <organismsDiffer>false</organismsDiffer>
    <experiments>5</experiments>
</comment>
<comment type="interaction">
    <interactant intactId="EBI-359622">
        <id>P78347</id>
    </interactant>
    <interactant intactId="EBI-624835">
        <id>Q06187</id>
        <label>BTK</label>
    </interactant>
    <organismsDiffer>false</organismsDiffer>
    <experiments>6</experiments>
</comment>
<comment type="interaction">
    <interactant intactId="EBI-12033200">
        <id>P78347-2</id>
    </interactant>
    <interactant intactId="EBI-11978055">
        <id>Q10567-3</id>
        <label>AP1B1</label>
    </interactant>
    <organismsDiffer>false</organismsDiffer>
    <experiments>3</experiments>
</comment>
<comment type="interaction">
    <interactant intactId="EBI-12033200">
        <id>P78347-2</id>
    </interactant>
    <interactant intactId="EBI-11529439">
        <id>P63010-2</id>
        <label>AP2B1</label>
    </interactant>
    <organismsDiffer>false</organismsDiffer>
    <experiments>4</experiments>
</comment>
<comment type="interaction">
    <interactant intactId="EBI-12033200">
        <id>P78347-2</id>
    </interactant>
    <interactant intactId="EBI-1188472">
        <id>P78358</id>
        <label>CTAG1B</label>
    </interactant>
    <organismsDiffer>false</organismsDiffer>
    <experiments>5</experiments>
</comment>
<comment type="interaction">
    <interactant intactId="EBI-12033200">
        <id>P78347-2</id>
    </interactant>
    <interactant intactId="EBI-744973">
        <id>Q9C005</id>
        <label>DPY30</label>
    </interactant>
    <organismsDiffer>false</organismsDiffer>
    <experiments>7</experiments>
</comment>
<comment type="interaction">
    <interactant intactId="EBI-12033200">
        <id>P78347-2</id>
    </interactant>
    <interactant intactId="EBI-2130429">
        <id>Q9BYV2</id>
        <label>TRIM54</label>
    </interactant>
    <organismsDiffer>false</organismsDiffer>
    <experiments>3</experiments>
</comment>
<comment type="subcellular location">
    <subcellularLocation>
        <location evidence="5">Cytoplasm</location>
    </subcellularLocation>
    <subcellularLocation>
        <location evidence="3 5">Nucleus</location>
    </subcellularLocation>
    <text>Colocalizes with BTK in the cytoplasm.</text>
</comment>
<comment type="alternative products">
    <event type="alternative splicing"/>
    <isoform>
        <id>P78347-1</id>
        <name>1</name>
        <sequence type="displayed"/>
    </isoform>
    <isoform>
        <id>P78347-2</id>
        <name>2</name>
        <sequence type="described" ref="VSP_003867 VSP_003868"/>
    </isoform>
    <isoform>
        <id>P78347-3</id>
        <name>3</name>
        <sequence type="described" ref="VSP_003867"/>
    </isoform>
    <isoform>
        <id>P78347-4</id>
        <name>4</name>
        <sequence type="described" ref="VSP_003868"/>
    </isoform>
    <isoform>
        <id>P78347-5</id>
        <name>5</name>
        <sequence type="described" ref="VSP_003867 VSP_055195 VSP_055196"/>
    </isoform>
</comment>
<comment type="tissue specificity">
    <text>Ubiquitous. Isoform 1 is strongly expressed in fetal brain, weakly in adult brain, muscle, and lymphoblasts and is almost undetectable in other adult tissues, while the other isoforms are equally expressed in all adult tissues.</text>
</comment>
<comment type="PTM">
    <text evidence="5 6 7 9">Transiently phosphorylated on tyrosine residues by BTK in response to B-cell receptor stimulation. Phosphorylation on Tyr-248 and Tyr-398, and perhaps, on Tyr-503 contributes to BTK-mediated transcriptional activation.</text>
</comment>
<comment type="PTM">
    <text evidence="8">Sumoylated.</text>
</comment>
<comment type="disease">
    <text>GTF2I is located in the Williams-Beuren syndrome (WBS) critical region. WBS results from a hemizygous deletion of several genes on chromosome 7q11.23, thought to arise as a consequence of unequal crossing over between highly homologous low-copy repeat sequences flanking the deleted region. Haploinsufficiency of GTF2I may be the cause of certain cardiovascular and musculo-skeletal abnormalities observed in the disease.</text>
</comment>
<comment type="similarity">
    <text evidence="3">Belongs to the TFII-I family.</text>
</comment>
<organism>
    <name type="scientific">Homo sapiens</name>
    <name type="common">Human</name>
    <dbReference type="NCBI Taxonomy" id="9606"/>
    <lineage>
        <taxon>Eukaryota</taxon>
        <taxon>Metazoa</taxon>
        <taxon>Chordata</taxon>
        <taxon>Craniata</taxon>
        <taxon>Vertebrata</taxon>
        <taxon>Euteleostomi</taxon>
        <taxon>Mammalia</taxon>
        <taxon>Eutheria</taxon>
        <taxon>Euarchontoglires</taxon>
        <taxon>Primates</taxon>
        <taxon>Haplorrhini</taxon>
        <taxon>Catarrhini</taxon>
        <taxon>Hominidae</taxon>
        <taxon>Homo</taxon>
    </lineage>
</organism>
<dbReference type="EMBL" id="AF015553">
    <property type="protein sequence ID" value="AAB70791.1"/>
    <property type="molecule type" value="mRNA"/>
</dbReference>
<dbReference type="EMBL" id="Y14946">
    <property type="protein sequence ID" value="CAA75163.1"/>
    <property type="molecule type" value="mRNA"/>
</dbReference>
<dbReference type="EMBL" id="U77948">
    <property type="protein sequence ID" value="AAB48826.1"/>
    <property type="molecule type" value="mRNA"/>
</dbReference>
<dbReference type="EMBL" id="AF035737">
    <property type="protein sequence ID" value="AAC08312.1"/>
    <property type="molecule type" value="mRNA"/>
</dbReference>
<dbReference type="EMBL" id="AF038967">
    <property type="protein sequence ID" value="AAC08313.1"/>
    <property type="molecule type" value="mRNA"/>
</dbReference>
<dbReference type="EMBL" id="AF038968">
    <property type="protein sequence ID" value="AAC08314.1"/>
    <property type="molecule type" value="mRNA"/>
</dbReference>
<dbReference type="EMBL" id="AF038969">
    <property type="protein sequence ID" value="AAC08315.1"/>
    <property type="molecule type" value="mRNA"/>
</dbReference>
<dbReference type="EMBL" id="BT007450">
    <property type="protein sequence ID" value="AAP36118.1"/>
    <property type="molecule type" value="mRNA"/>
</dbReference>
<dbReference type="EMBL" id="AC005231">
    <property type="status" value="NOT_ANNOTATED_CDS"/>
    <property type="molecule type" value="Genomic_DNA"/>
</dbReference>
<dbReference type="EMBL" id="AC083884">
    <property type="protein sequence ID" value="AAS07460.1"/>
    <property type="molecule type" value="Genomic_DNA"/>
</dbReference>
<dbReference type="EMBL" id="AC083884">
    <property type="protein sequence ID" value="AAS07461.1"/>
    <property type="molecule type" value="Genomic_DNA"/>
</dbReference>
<dbReference type="EMBL" id="AC083884">
    <property type="protein sequence ID" value="AAS07462.1"/>
    <property type="molecule type" value="Genomic_DNA"/>
</dbReference>
<dbReference type="EMBL" id="AC083884">
    <property type="protein sequence ID" value="AAS07463.1"/>
    <property type="molecule type" value="Genomic_DNA"/>
</dbReference>
<dbReference type="EMBL" id="AC083884">
    <property type="protein sequence ID" value="AAS07464.1"/>
    <property type="molecule type" value="Genomic_DNA"/>
</dbReference>
<dbReference type="EMBL" id="AC004883">
    <property type="protein sequence ID" value="AAL93085.1"/>
    <property type="molecule type" value="Genomic_DNA"/>
</dbReference>
<dbReference type="EMBL" id="CH471200">
    <property type="protein sequence ID" value="EAW69598.1"/>
    <property type="molecule type" value="Genomic_DNA"/>
</dbReference>
<dbReference type="EMBL" id="BC004472">
    <property type="protein sequence ID" value="AAH04472.1"/>
    <property type="molecule type" value="mRNA"/>
</dbReference>
<dbReference type="EMBL" id="BC070484">
    <property type="protein sequence ID" value="AAH70484.1"/>
    <property type="molecule type" value="mRNA"/>
</dbReference>
<dbReference type="CCDS" id="CCDS47614.1">
    <molecule id="P78347-2"/>
</dbReference>
<dbReference type="CCDS" id="CCDS5573.1">
    <molecule id="P78347-1"/>
</dbReference>
<dbReference type="CCDS" id="CCDS5574.1">
    <molecule id="P78347-3"/>
</dbReference>
<dbReference type="CCDS" id="CCDS5575.1">
    <molecule id="P78347-4"/>
</dbReference>
<dbReference type="CCDS" id="CCDS64680.1">
    <molecule id="P78347-5"/>
</dbReference>
<dbReference type="PIR" id="T03829">
    <property type="entry name" value="T03829"/>
</dbReference>
<dbReference type="PIR" id="T09492">
    <property type="entry name" value="T09492"/>
</dbReference>
<dbReference type="RefSeq" id="NP_001157108.1">
    <property type="nucleotide sequence ID" value="NM_001163636.2"/>
</dbReference>
<dbReference type="RefSeq" id="NP_001267729.1">
    <molecule id="P78347-5"/>
    <property type="nucleotide sequence ID" value="NM_001280800.2"/>
</dbReference>
<dbReference type="RefSeq" id="NP_001509.3">
    <molecule id="P78347-2"/>
    <property type="nucleotide sequence ID" value="NM_001518.4"/>
</dbReference>
<dbReference type="RefSeq" id="NP_127492.1">
    <molecule id="P78347-1"/>
    <property type="nucleotide sequence ID" value="NM_032999.4"/>
</dbReference>
<dbReference type="RefSeq" id="NP_127493.1">
    <molecule id="P78347-3"/>
    <property type="nucleotide sequence ID" value="NM_033000.4"/>
</dbReference>
<dbReference type="RefSeq" id="NP_127494.1">
    <molecule id="P78347-4"/>
    <property type="nucleotide sequence ID" value="NM_033001.4"/>
</dbReference>
<dbReference type="PDB" id="2D9B">
    <property type="method" value="NMR"/>
    <property type="chains" value="A=102-197"/>
</dbReference>
<dbReference type="PDB" id="2DN4">
    <property type="method" value="NMR"/>
    <property type="chains" value="A=361-446"/>
</dbReference>
<dbReference type="PDB" id="2ED2">
    <property type="method" value="NMR"/>
    <property type="chains" value="A=466-551"/>
</dbReference>
<dbReference type="PDB" id="2EJE">
    <property type="method" value="NMR"/>
    <property type="chains" value="A=854-954"/>
</dbReference>
<dbReference type="PDBsum" id="2D9B"/>
<dbReference type="PDBsum" id="2DN4"/>
<dbReference type="PDBsum" id="2ED2"/>
<dbReference type="PDBsum" id="2EJE"/>
<dbReference type="SMR" id="P78347"/>
<dbReference type="BioGRID" id="109224">
    <property type="interactions" value="398"/>
</dbReference>
<dbReference type="CORUM" id="P78347"/>
<dbReference type="DIP" id="DIP-24252N"/>
<dbReference type="FunCoup" id="P78347">
    <property type="interactions" value="3497"/>
</dbReference>
<dbReference type="IntAct" id="P78347">
    <property type="interactions" value="130"/>
</dbReference>
<dbReference type="MINT" id="P78347"/>
<dbReference type="STRING" id="9606.ENSP00000460070"/>
<dbReference type="GlyCosmos" id="P78347">
    <property type="glycosylation" value="1 site, 1 glycan"/>
</dbReference>
<dbReference type="GlyGen" id="P78347">
    <property type="glycosylation" value="4 sites, 1 O-linked glycan (3 sites)"/>
</dbReference>
<dbReference type="iPTMnet" id="P78347"/>
<dbReference type="MetOSite" id="P78347"/>
<dbReference type="PhosphoSitePlus" id="P78347"/>
<dbReference type="SwissPalm" id="P78347"/>
<dbReference type="BioMuta" id="GTF2I"/>
<dbReference type="DMDM" id="17865459"/>
<dbReference type="CPTAC" id="CPTAC-1349"/>
<dbReference type="jPOST" id="P78347"/>
<dbReference type="MassIVE" id="P78347"/>
<dbReference type="PaxDb" id="9606-ENSP00000460070"/>
<dbReference type="PeptideAtlas" id="P78347"/>
<dbReference type="ProteomicsDB" id="57578">
    <molecule id="P78347-1"/>
</dbReference>
<dbReference type="ProteomicsDB" id="57579">
    <molecule id="P78347-2"/>
</dbReference>
<dbReference type="ProteomicsDB" id="57580">
    <molecule id="P78347-3"/>
</dbReference>
<dbReference type="ProteomicsDB" id="57581">
    <molecule id="P78347-4"/>
</dbReference>
<dbReference type="ProteomicsDB" id="69770"/>
<dbReference type="Pumba" id="P78347"/>
<dbReference type="Antibodypedia" id="73029">
    <property type="antibodies" value="447 antibodies from 35 providers"/>
</dbReference>
<dbReference type="DNASU" id="2969"/>
<dbReference type="Ensembl" id="ENST00000443166.5">
    <molecule id="P78347-5"/>
    <property type="protein sequence ID" value="ENSP00000404240.1"/>
    <property type="gene ID" value="ENSG00000263001.8"/>
</dbReference>
<dbReference type="Ensembl" id="ENST00000573035.6">
    <molecule id="P78347-1"/>
    <property type="protein sequence ID" value="ENSP00000460070.1"/>
    <property type="gene ID" value="ENSG00000263001.8"/>
</dbReference>
<dbReference type="Ensembl" id="ENST00000614986.4">
    <molecule id="P78347-3"/>
    <property type="protein sequence ID" value="ENSP00000484526.1"/>
    <property type="gene ID" value="ENSG00000263001.8"/>
</dbReference>
<dbReference type="Ensembl" id="ENST00000620879.4">
    <molecule id="P78347-2"/>
    <property type="protein sequence ID" value="ENSP00000477837.1"/>
    <property type="gene ID" value="ENSG00000263001.8"/>
</dbReference>
<dbReference type="Ensembl" id="ENST00000621734.4">
    <molecule id="P78347-4"/>
    <property type="protein sequence ID" value="ENSP00000482476.1"/>
    <property type="gene ID" value="ENSG00000263001.8"/>
</dbReference>
<dbReference type="GeneID" id="2969"/>
<dbReference type="KEGG" id="hsa:2969"/>
<dbReference type="MANE-Select" id="ENST00000573035.6">
    <property type="protein sequence ID" value="ENSP00000460070.1"/>
    <property type="RefSeq nucleotide sequence ID" value="NM_032999.4"/>
    <property type="RefSeq protein sequence ID" value="NP_127492.1"/>
</dbReference>
<dbReference type="UCSC" id="uc003uat.5">
    <molecule id="P78347-1"/>
    <property type="organism name" value="human"/>
</dbReference>
<dbReference type="AGR" id="HGNC:4659"/>
<dbReference type="CTD" id="2969"/>
<dbReference type="DisGeNET" id="2969"/>
<dbReference type="GeneCards" id="GTF2I"/>
<dbReference type="GeneReviews" id="GTF2I"/>
<dbReference type="HGNC" id="HGNC:4659">
    <property type="gene designation" value="GTF2I"/>
</dbReference>
<dbReference type="HPA" id="ENSG00000263001">
    <property type="expression patterns" value="Low tissue specificity"/>
</dbReference>
<dbReference type="MalaCards" id="GTF2I"/>
<dbReference type="MIM" id="601679">
    <property type="type" value="gene"/>
</dbReference>
<dbReference type="neXtProt" id="NX_P78347"/>
<dbReference type="OpenTargets" id="ENSG00000263001"/>
<dbReference type="Orphanet" id="904">
    <property type="disease" value="Williams syndrome"/>
</dbReference>
<dbReference type="PharmGKB" id="PA29045"/>
<dbReference type="VEuPathDB" id="HostDB:ENSG00000263001"/>
<dbReference type="eggNOG" id="ENOG502QWD0">
    <property type="taxonomic scope" value="Eukaryota"/>
</dbReference>
<dbReference type="GeneTree" id="ENSGT00940000160349"/>
<dbReference type="HOGENOM" id="CLU_011773_0_0_1"/>
<dbReference type="InParanoid" id="P78347"/>
<dbReference type="OrthoDB" id="10072451at2759"/>
<dbReference type="PAN-GO" id="P78347">
    <property type="GO annotations" value="2 GO annotations based on evolutionary models"/>
</dbReference>
<dbReference type="PhylomeDB" id="P78347"/>
<dbReference type="TreeFam" id="TF352524"/>
<dbReference type="PathwayCommons" id="P78347"/>
<dbReference type="SignaLink" id="P78347"/>
<dbReference type="SIGNOR" id="P78347"/>
<dbReference type="BioGRID-ORCS" id="2969">
    <property type="hits" value="74 hits in 1155 CRISPR screens"/>
</dbReference>
<dbReference type="CD-CODE" id="91857CE7">
    <property type="entry name" value="Nucleolus"/>
</dbReference>
<dbReference type="ChiTaRS" id="GTF2I">
    <property type="organism name" value="human"/>
</dbReference>
<dbReference type="EvolutionaryTrace" id="P78347"/>
<dbReference type="GeneWiki" id="GTF2I"/>
<dbReference type="GenomeRNAi" id="2969"/>
<dbReference type="Pharos" id="P78347">
    <property type="development level" value="Tbio"/>
</dbReference>
<dbReference type="PRO" id="PR:P78347"/>
<dbReference type="Proteomes" id="UP000005640">
    <property type="component" value="Chromosome 7"/>
</dbReference>
<dbReference type="RNAct" id="P78347">
    <property type="molecule type" value="protein"/>
</dbReference>
<dbReference type="Bgee" id="ENSG00000263001">
    <property type="expression patterns" value="Expressed in ganglionic eminence and 156 other cell types or tissues"/>
</dbReference>
<dbReference type="ExpressionAtlas" id="P78347">
    <property type="expression patterns" value="baseline and differential"/>
</dbReference>
<dbReference type="GO" id="GO:0005737">
    <property type="term" value="C:cytoplasm"/>
    <property type="evidence" value="ECO:0007669"/>
    <property type="project" value="UniProtKB-SubCell"/>
</dbReference>
<dbReference type="GO" id="GO:0016020">
    <property type="term" value="C:membrane"/>
    <property type="evidence" value="ECO:0007005"/>
    <property type="project" value="UniProtKB"/>
</dbReference>
<dbReference type="GO" id="GO:0005654">
    <property type="term" value="C:nucleoplasm"/>
    <property type="evidence" value="ECO:0000314"/>
    <property type="project" value="HPA"/>
</dbReference>
<dbReference type="GO" id="GO:0005634">
    <property type="term" value="C:nucleus"/>
    <property type="evidence" value="ECO:0000314"/>
    <property type="project" value="MGI"/>
</dbReference>
<dbReference type="GO" id="GO:0003677">
    <property type="term" value="F:DNA binding"/>
    <property type="evidence" value="ECO:0007669"/>
    <property type="project" value="UniProtKB-KW"/>
</dbReference>
<dbReference type="GO" id="GO:0001228">
    <property type="term" value="F:DNA-binding transcription activator activity, RNA polymerase II-specific"/>
    <property type="evidence" value="ECO:0000314"/>
    <property type="project" value="ARUK-UCL"/>
</dbReference>
<dbReference type="GO" id="GO:0003700">
    <property type="term" value="F:DNA-binding transcription factor activity"/>
    <property type="evidence" value="ECO:0000318"/>
    <property type="project" value="GO_Central"/>
</dbReference>
<dbReference type="GO" id="GO:0000981">
    <property type="term" value="F:DNA-binding transcription factor activity, RNA polymerase II-specific"/>
    <property type="evidence" value="ECO:0000303"/>
    <property type="project" value="ARUK-UCL"/>
</dbReference>
<dbReference type="GO" id="GO:0061629">
    <property type="term" value="F:RNA polymerase II-specific DNA-binding transcription factor binding"/>
    <property type="evidence" value="ECO:0000353"/>
    <property type="project" value="ARUK-UCL"/>
</dbReference>
<dbReference type="GO" id="GO:0016525">
    <property type="term" value="P:negative regulation of angiogenesis"/>
    <property type="evidence" value="ECO:0000314"/>
    <property type="project" value="MGI"/>
</dbReference>
<dbReference type="GO" id="GO:0045944">
    <property type="term" value="P:positive regulation of transcription by RNA polymerase II"/>
    <property type="evidence" value="ECO:0000314"/>
    <property type="project" value="ARUK-UCL"/>
</dbReference>
<dbReference type="GO" id="GO:0006366">
    <property type="term" value="P:transcription by RNA polymerase II"/>
    <property type="evidence" value="ECO:0007669"/>
    <property type="project" value="InterPro"/>
</dbReference>
<dbReference type="FunFam" id="3.90.1460.10:FF:000002">
    <property type="entry name" value="General transcription factor II-I isoform 1"/>
    <property type="match status" value="1"/>
</dbReference>
<dbReference type="FunFam" id="3.90.1460.10:FF:000001">
    <property type="entry name" value="general transcription factor II-I isoform X1"/>
    <property type="match status" value="3"/>
</dbReference>
<dbReference type="FunFam" id="3.90.1460.10:FF:000003">
    <property type="entry name" value="general transcription factor II-I isoform X1"/>
    <property type="match status" value="1"/>
</dbReference>
<dbReference type="FunFam" id="3.90.1460.10:FF:000004">
    <property type="entry name" value="general transcription factor II-I isoform X1"/>
    <property type="match status" value="1"/>
</dbReference>
<dbReference type="Gene3D" id="3.90.1460.10">
    <property type="entry name" value="GTF2I-like"/>
    <property type="match status" value="6"/>
</dbReference>
<dbReference type="InterPro" id="IPR004212">
    <property type="entry name" value="GTF2I"/>
</dbReference>
<dbReference type="InterPro" id="IPR036647">
    <property type="entry name" value="GTF2I-like_rpt_sf"/>
</dbReference>
<dbReference type="InterPro" id="IPR016659">
    <property type="entry name" value="TF_II-I"/>
</dbReference>
<dbReference type="PANTHER" id="PTHR46304:SF2">
    <property type="entry name" value="GENERAL TRANSCRIPTION FACTOR II-I"/>
    <property type="match status" value="1"/>
</dbReference>
<dbReference type="PANTHER" id="PTHR46304">
    <property type="entry name" value="GENERAL TRANSCRIPTION FACTOR II-I REPEAT DOMAIN-CONTAINING PROTEIN 1"/>
    <property type="match status" value="1"/>
</dbReference>
<dbReference type="Pfam" id="PF02946">
    <property type="entry name" value="GTF2I"/>
    <property type="match status" value="6"/>
</dbReference>
<dbReference type="PIRSF" id="PIRSF016441">
    <property type="entry name" value="TF_II-I"/>
    <property type="match status" value="1"/>
</dbReference>
<dbReference type="SUPFAM" id="SSF117773">
    <property type="entry name" value="GTF2I-like repeat"/>
    <property type="match status" value="6"/>
</dbReference>
<dbReference type="PROSITE" id="PS51139">
    <property type="entry name" value="GTF2I"/>
    <property type="match status" value="6"/>
</dbReference>
<accession>P78347</accession>
<accession>O14743</accession>
<accession>O15359</accession>
<accession>O43546</accession>
<accession>O43588</accession>
<accession>O43589</accession>
<accession>Q75M85</accession>
<accession>Q75M86</accession>
<accession>Q75M87</accession>
<accession>Q75M88</accession>
<accession>Q86U51</accession>
<accession>Q9BSZ4</accession>
<sequence length="998" mass="112416">MAQVAMSTLPVEDEESSESRMVVTFLMSALESMCKELAKSKAEVACIAVYETDVFVVGTERGRAFVNTRKDFQKDFVKYCVEEEEKAAEMHKMKSTTQANRMSVDAVEIETLRKTVEDYFCFCYGKALGKSTVVPVPYEKMLRDQSAVVVQGLPEGVAFKHPENYDLATLKWILENKAGISFIIKRPFLEPKKHVGGRVMVTDADRSILSPGGSCGPIKVKTEPTEDSGISLEMAAVTVKEESEDPDYYQYNIQAGPSETDDVDEKQPLSKPLQGSHHSSEGNEGTEMEVPAEDSTQHVPSETSEDPEVEVTIEDDDYSPPSKRPKANELPQPPVPEPANAGKRKVREFNFEKWNARITDLRKQVEELFERKYAQAIKAKGPVTIPYPLFQSHVEDLYVEGLPEGIPFRRPSTYGIPRLERILLAKERIRFVIKKHELLNSTREDLQLDKPASGVKEEWYARITKLRKMVDQLFCKKFAEALGSTEAKAVPYQKFEAHPNDLYVEGLPENIPFRSPSWYGIPRLEKIIQVGNRIKFVIKRPELLTHSTTEVTQPRTNTPVKEDWNVRITKLRKQVEEIFNLKFAQALGLTEAVKVPYPVFESNPEFLYVEGLPEGIPFRSPTWFGIPRLERIVRGSNKIKFVVKKPELVISYLPPGMASKINTKALQSPKRPRSPGSNSKVPEIEVTVEGPNNNNPQTSAVRTPTQTNGSNVPFKPRGREFSFEAWNAKITDLKQKVENLFNEKCGEALGLKQAVKVPFALFESFPEDFYVEGLPEGVPFRRPSTFGIPRLEKILRNKAKIKFIIKKPEMFETAIKESTSSKSPPRKINSSPNVNTTASGVEDLNIIQVTIPDDDNERLSKVEKARQLREQVNDLFSRKFGEAIGMGFPVKVPYRKITINPGCVVVDGMPPGVSFKAPSYLEISSMRRILDSAEFIKFTVIRPFPGLVINNQLVDQSESEGPVIQESAEPSQLEVPATEEIKETDGSSQIKQEPDPTW</sequence>